<reference key="1">
    <citation type="journal article" date="1999" name="Nature">
        <title>Sequence and analysis of chromosome 4 of the plant Arabidopsis thaliana.</title>
        <authorList>
            <person name="Mayer K.F.X."/>
            <person name="Schueller C."/>
            <person name="Wambutt R."/>
            <person name="Murphy G."/>
            <person name="Volckaert G."/>
            <person name="Pohl T."/>
            <person name="Duesterhoeft A."/>
            <person name="Stiekema W."/>
            <person name="Entian K.-D."/>
            <person name="Terryn N."/>
            <person name="Harris B."/>
            <person name="Ansorge W."/>
            <person name="Brandt P."/>
            <person name="Grivell L.A."/>
            <person name="Rieger M."/>
            <person name="Weichselgartner M."/>
            <person name="de Simone V."/>
            <person name="Obermaier B."/>
            <person name="Mache R."/>
            <person name="Mueller M."/>
            <person name="Kreis M."/>
            <person name="Delseny M."/>
            <person name="Puigdomenech P."/>
            <person name="Watson M."/>
            <person name="Schmidtheini T."/>
            <person name="Reichert B."/>
            <person name="Portetelle D."/>
            <person name="Perez-Alonso M."/>
            <person name="Boutry M."/>
            <person name="Bancroft I."/>
            <person name="Vos P."/>
            <person name="Hoheisel J."/>
            <person name="Zimmermann W."/>
            <person name="Wedler H."/>
            <person name="Ridley P."/>
            <person name="Langham S.-A."/>
            <person name="McCullagh B."/>
            <person name="Bilham L."/>
            <person name="Robben J."/>
            <person name="van der Schueren J."/>
            <person name="Grymonprez B."/>
            <person name="Chuang Y.-J."/>
            <person name="Vandenbussche F."/>
            <person name="Braeken M."/>
            <person name="Weltjens I."/>
            <person name="Voet M."/>
            <person name="Bastiaens I."/>
            <person name="Aert R."/>
            <person name="Defoor E."/>
            <person name="Weitzenegger T."/>
            <person name="Bothe G."/>
            <person name="Ramsperger U."/>
            <person name="Hilbert H."/>
            <person name="Braun M."/>
            <person name="Holzer E."/>
            <person name="Brandt A."/>
            <person name="Peters S."/>
            <person name="van Staveren M."/>
            <person name="Dirkse W."/>
            <person name="Mooijman P."/>
            <person name="Klein Lankhorst R."/>
            <person name="Rose M."/>
            <person name="Hauf J."/>
            <person name="Koetter P."/>
            <person name="Berneiser S."/>
            <person name="Hempel S."/>
            <person name="Feldpausch M."/>
            <person name="Lamberth S."/>
            <person name="Van den Daele H."/>
            <person name="De Keyser A."/>
            <person name="Buysshaert C."/>
            <person name="Gielen J."/>
            <person name="Villarroel R."/>
            <person name="De Clercq R."/>
            <person name="van Montagu M."/>
            <person name="Rogers J."/>
            <person name="Cronin A."/>
            <person name="Quail M.A."/>
            <person name="Bray-Allen S."/>
            <person name="Clark L."/>
            <person name="Doggett J."/>
            <person name="Hall S."/>
            <person name="Kay M."/>
            <person name="Lennard N."/>
            <person name="McLay K."/>
            <person name="Mayes R."/>
            <person name="Pettett A."/>
            <person name="Rajandream M.A."/>
            <person name="Lyne M."/>
            <person name="Benes V."/>
            <person name="Rechmann S."/>
            <person name="Borkova D."/>
            <person name="Bloecker H."/>
            <person name="Scharfe M."/>
            <person name="Grimm M."/>
            <person name="Loehnert T.-H."/>
            <person name="Dose S."/>
            <person name="de Haan M."/>
            <person name="Maarse A.C."/>
            <person name="Schaefer M."/>
            <person name="Mueller-Auer S."/>
            <person name="Gabel C."/>
            <person name="Fuchs M."/>
            <person name="Fartmann B."/>
            <person name="Granderath K."/>
            <person name="Dauner D."/>
            <person name="Herzl A."/>
            <person name="Neumann S."/>
            <person name="Argiriou A."/>
            <person name="Vitale D."/>
            <person name="Liguori R."/>
            <person name="Piravandi E."/>
            <person name="Massenet O."/>
            <person name="Quigley F."/>
            <person name="Clabauld G."/>
            <person name="Muendlein A."/>
            <person name="Felber R."/>
            <person name="Schnabl S."/>
            <person name="Hiller R."/>
            <person name="Schmidt W."/>
            <person name="Lecharny A."/>
            <person name="Aubourg S."/>
            <person name="Chefdor F."/>
            <person name="Cooke R."/>
            <person name="Berger C."/>
            <person name="Monfort A."/>
            <person name="Casacuberta E."/>
            <person name="Gibbons T."/>
            <person name="Weber N."/>
            <person name="Vandenbol M."/>
            <person name="Bargues M."/>
            <person name="Terol J."/>
            <person name="Torres A."/>
            <person name="Perez-Perez A."/>
            <person name="Purnelle B."/>
            <person name="Bent E."/>
            <person name="Johnson S."/>
            <person name="Tacon D."/>
            <person name="Jesse T."/>
            <person name="Heijnen L."/>
            <person name="Schwarz S."/>
            <person name="Scholler P."/>
            <person name="Heber S."/>
            <person name="Francs P."/>
            <person name="Bielke C."/>
            <person name="Frishman D."/>
            <person name="Haase D."/>
            <person name="Lemcke K."/>
            <person name="Mewes H.-W."/>
            <person name="Stocker S."/>
            <person name="Zaccaria P."/>
            <person name="Bevan M."/>
            <person name="Wilson R.K."/>
            <person name="de la Bastide M."/>
            <person name="Habermann K."/>
            <person name="Parnell L."/>
            <person name="Dedhia N."/>
            <person name="Gnoj L."/>
            <person name="Schutz K."/>
            <person name="Huang E."/>
            <person name="Spiegel L."/>
            <person name="Sekhon M."/>
            <person name="Murray J."/>
            <person name="Sheet P."/>
            <person name="Cordes M."/>
            <person name="Abu-Threideh J."/>
            <person name="Stoneking T."/>
            <person name="Kalicki J."/>
            <person name="Graves T."/>
            <person name="Harmon G."/>
            <person name="Edwards J."/>
            <person name="Latreille P."/>
            <person name="Courtney L."/>
            <person name="Cloud J."/>
            <person name="Abbott A."/>
            <person name="Scott K."/>
            <person name="Johnson D."/>
            <person name="Minx P."/>
            <person name="Bentley D."/>
            <person name="Fulton B."/>
            <person name="Miller N."/>
            <person name="Greco T."/>
            <person name="Kemp K."/>
            <person name="Kramer J."/>
            <person name="Fulton L."/>
            <person name="Mardis E."/>
            <person name="Dante M."/>
            <person name="Pepin K."/>
            <person name="Hillier L.W."/>
            <person name="Nelson J."/>
            <person name="Spieth J."/>
            <person name="Ryan E."/>
            <person name="Andrews S."/>
            <person name="Geisel C."/>
            <person name="Layman D."/>
            <person name="Du H."/>
            <person name="Ali J."/>
            <person name="Berghoff A."/>
            <person name="Jones K."/>
            <person name="Drone K."/>
            <person name="Cotton M."/>
            <person name="Joshu C."/>
            <person name="Antonoiu B."/>
            <person name="Zidanic M."/>
            <person name="Strong C."/>
            <person name="Sun H."/>
            <person name="Lamar B."/>
            <person name="Yordan C."/>
            <person name="Ma P."/>
            <person name="Zhong J."/>
            <person name="Preston R."/>
            <person name="Vil D."/>
            <person name="Shekher M."/>
            <person name="Matero A."/>
            <person name="Shah R."/>
            <person name="Swaby I.K."/>
            <person name="O'Shaughnessy A."/>
            <person name="Rodriguez M."/>
            <person name="Hoffman J."/>
            <person name="Till S."/>
            <person name="Granat S."/>
            <person name="Shohdy N."/>
            <person name="Hasegawa A."/>
            <person name="Hameed A."/>
            <person name="Lodhi M."/>
            <person name="Johnson A."/>
            <person name="Chen E."/>
            <person name="Marra M.A."/>
            <person name="Martienssen R."/>
            <person name="McCombie W.R."/>
        </authorList>
    </citation>
    <scope>NUCLEOTIDE SEQUENCE [LARGE SCALE GENOMIC DNA]</scope>
    <source>
        <strain>cv. Columbia</strain>
    </source>
</reference>
<reference key="2">
    <citation type="journal article" date="2017" name="Plant J.">
        <title>Araport11: a complete reannotation of the Arabidopsis thaliana reference genome.</title>
        <authorList>
            <person name="Cheng C.Y."/>
            <person name="Krishnakumar V."/>
            <person name="Chan A.P."/>
            <person name="Thibaud-Nissen F."/>
            <person name="Schobel S."/>
            <person name="Town C.D."/>
        </authorList>
    </citation>
    <scope>GENOME REANNOTATION</scope>
    <source>
        <strain>cv. Columbia</strain>
    </source>
</reference>
<reference key="3">
    <citation type="submission" date="2005-05" db="EMBL/GenBank/DDBJ databases">
        <title>Arabidopsis ORF clones.</title>
        <authorList>
            <person name="Kim C.J."/>
            <person name="Chen H."/>
            <person name="Cheuk R.F."/>
            <person name="Shinn P."/>
            <person name="Ecker J.R."/>
        </authorList>
    </citation>
    <scope>NUCLEOTIDE SEQUENCE [LARGE SCALE MRNA]</scope>
    <source>
        <strain>cv. Columbia</strain>
    </source>
</reference>
<reference key="4">
    <citation type="submission" date="2006-07" db="EMBL/GenBank/DDBJ databases">
        <title>Large-scale analysis of RIKEN Arabidopsis full-length (RAFL) cDNAs.</title>
        <authorList>
            <person name="Totoki Y."/>
            <person name="Seki M."/>
            <person name="Ishida J."/>
            <person name="Nakajima M."/>
            <person name="Enju A."/>
            <person name="Kamiya A."/>
            <person name="Narusaka M."/>
            <person name="Shin-i T."/>
            <person name="Nakagawa M."/>
            <person name="Sakamoto N."/>
            <person name="Oishi K."/>
            <person name="Kohara Y."/>
            <person name="Kobayashi M."/>
            <person name="Toyoda A."/>
            <person name="Sakaki Y."/>
            <person name="Sakurai T."/>
            <person name="Iida K."/>
            <person name="Akiyama K."/>
            <person name="Satou M."/>
            <person name="Toyoda T."/>
            <person name="Konagaya A."/>
            <person name="Carninci P."/>
            <person name="Kawai J."/>
            <person name="Hayashizaki Y."/>
            <person name="Shinozaki K."/>
        </authorList>
    </citation>
    <scope>NUCLEOTIDE SEQUENCE [LARGE SCALE MRNA]</scope>
    <source>
        <strain>cv. Columbia</strain>
    </source>
</reference>
<reference key="5">
    <citation type="journal article" date="2004" name="Plant Mol. Biol.">
        <title>Identification of a novel plant MAR DNA binding protein localized on chromosomal surfaces.</title>
        <authorList>
            <person name="Fujimoto S."/>
            <person name="Matsunaga S."/>
            <person name="Yonemura M."/>
            <person name="Uchiyama S."/>
            <person name="Azuma T."/>
            <person name="Fukui K."/>
        </authorList>
    </citation>
    <scope>IDENTIFICATION</scope>
    <scope>GENE FAMILY</scope>
    <scope>NOMENCLATURE</scope>
    <source>
        <strain>cv. Columbia</strain>
    </source>
</reference>
<reference key="6">
    <citation type="journal article" date="2013" name="Proc. Natl. Acad. Sci. U.S.A.">
        <title>Arabidopsis thaliana AHL family modulates hypocotyl growth redundantly by interacting with each other via the PPC/DUF296 domain.</title>
        <authorList>
            <person name="Zhao J."/>
            <person name="Favero D.S."/>
            <person name="Peng H."/>
            <person name="Neff M.M."/>
        </authorList>
    </citation>
    <scope>GENE FAMILY</scope>
    <scope>DOMAIN PPC</scope>
</reference>
<sequence>METSDRISPGGGIGAEVPSAYHMAPRPSDSPANQFMGLSLPPMEAPMPSSGEASGKKRRGRPRKYEANGAPLPSSSVPLVKKRVRGKLNGFDMKKMHKTIGFHSSGERFGVGGGVGGGVGSNFTPHVITVNTGEDITMRIISFSQQGPRAICILSANGVISNVTLRQPDSCGGTLTYEGRFEILSLSGSFMETENQGSKGRSGGMSVSLAGPDGRVVGGGVAGLLIAATPIQVVVGSFITSDQQDHQKPRKQRVEHAPAAVMSVPPPPSPPPPAASVFSPTNPDREQPPSSFGISSWTNGQDMPRNSATDINISLPVD</sequence>
<keyword id="KW-0238">DNA-binding</keyword>
<keyword id="KW-0539">Nucleus</keyword>
<keyword id="KW-1185">Reference proteome</keyword>
<keyword id="KW-0804">Transcription</keyword>
<keyword id="KW-0805">Transcription regulation</keyword>
<evidence type="ECO:0000250" key="1">
    <source>
        <dbReference type="UniProtKB" id="Q8VYJ2"/>
    </source>
</evidence>
<evidence type="ECO:0000255" key="2"/>
<evidence type="ECO:0000255" key="3">
    <source>
        <dbReference type="PROSITE-ProRule" id="PRU01078"/>
    </source>
</evidence>
<evidence type="ECO:0000256" key="4">
    <source>
        <dbReference type="SAM" id="MobiDB-lite"/>
    </source>
</evidence>
<evidence type="ECO:0000269" key="5">
    <source>
    </source>
</evidence>
<evidence type="ECO:0000303" key="6">
    <source>
    </source>
</evidence>
<evidence type="ECO:0000305" key="7"/>
<evidence type="ECO:0000312" key="8">
    <source>
        <dbReference type="Araport" id="AT4G00200"/>
    </source>
</evidence>
<evidence type="ECO:0000312" key="9">
    <source>
        <dbReference type="EMBL" id="AAC19314.1"/>
    </source>
</evidence>
<evidence type="ECO:0000312" key="10">
    <source>
        <dbReference type="EMBL" id="FAA00278.1"/>
    </source>
</evidence>
<gene>
    <name evidence="6" type="primary">AHL7</name>
    <name evidence="8" type="ordered locus">At4g00200</name>
    <name evidence="9" type="ORF">F6N15.24</name>
</gene>
<feature type="chain" id="PRO_0000432025" description="AT-hook motif nuclear-localized protein 7">
    <location>
        <begin position="1"/>
        <end position="318"/>
    </location>
</feature>
<feature type="domain" description="PPC" evidence="3">
    <location>
        <begin position="120"/>
        <end position="259"/>
    </location>
</feature>
<feature type="DNA-binding region" description="A.T hook" evidence="2">
    <location>
        <begin position="56"/>
        <end position="68"/>
    </location>
</feature>
<feature type="region of interest" description="Disordered" evidence="4">
    <location>
        <begin position="1"/>
        <end position="76"/>
    </location>
</feature>
<feature type="region of interest" description="Disordered" evidence="4">
    <location>
        <begin position="241"/>
        <end position="318"/>
    </location>
</feature>
<feature type="short sequence motif" description="Bipartite nuclear localization signal" evidence="7">
    <location>
        <begin position="56"/>
        <end position="64"/>
    </location>
</feature>
<feature type="compositionally biased region" description="Basic and acidic residues" evidence="4">
    <location>
        <begin position="243"/>
        <end position="256"/>
    </location>
</feature>
<feature type="compositionally biased region" description="Pro residues" evidence="4">
    <location>
        <begin position="264"/>
        <end position="274"/>
    </location>
</feature>
<feature type="compositionally biased region" description="Polar residues" evidence="4">
    <location>
        <begin position="288"/>
        <end position="312"/>
    </location>
</feature>
<comment type="function">
    <text evidence="1">Transcription factor that specifically binds AT-rich DNA sequences related to the nuclear matrix attachment regions (MARs).</text>
</comment>
<comment type="subcellular location">
    <subcellularLocation>
        <location evidence="1">Nucleus</location>
    </subcellularLocation>
</comment>
<comment type="domain">
    <text evidence="5">The PPC domain mediates interactions between AHL proteins.</text>
</comment>
<comment type="sequence caution" evidence="7">
    <conflict type="erroneous gene model prediction">
        <sequence resource="EMBL-CDS" id="AAC19314"/>
    </conflict>
</comment>
<comment type="sequence caution" evidence="7">
    <conflict type="erroneous gene model prediction">
        <sequence resource="EMBL-CDS" id="CAB80778"/>
    </conflict>
</comment>
<comment type="sequence caution" evidence="7">
    <conflict type="erroneous gene model prediction">
        <sequence resource="EMBL-CDS" id="FAA00278"/>
    </conflict>
</comment>
<protein>
    <recommendedName>
        <fullName evidence="10">AT-hook motif nuclear-localized protein 7</fullName>
    </recommendedName>
</protein>
<dbReference type="EMBL" id="AF069299">
    <property type="protein sequence ID" value="AAC19314.1"/>
    <property type="status" value="ALT_SEQ"/>
    <property type="molecule type" value="Genomic_DNA"/>
</dbReference>
<dbReference type="EMBL" id="AL161471">
    <property type="protein sequence ID" value="CAB80778.1"/>
    <property type="status" value="ALT_SEQ"/>
    <property type="molecule type" value="Genomic_DNA"/>
</dbReference>
<dbReference type="EMBL" id="CP002687">
    <property type="protein sequence ID" value="AEE81837.1"/>
    <property type="molecule type" value="Genomic_DNA"/>
</dbReference>
<dbReference type="EMBL" id="CP002687">
    <property type="protein sequence ID" value="ANM67819.1"/>
    <property type="molecule type" value="Genomic_DNA"/>
</dbReference>
<dbReference type="EMBL" id="BT023416">
    <property type="protein sequence ID" value="AAY56407.1"/>
    <property type="molecule type" value="mRNA"/>
</dbReference>
<dbReference type="EMBL" id="AK228631">
    <property type="protein sequence ID" value="BAF00540.1"/>
    <property type="molecule type" value="mRNA"/>
</dbReference>
<dbReference type="EMBL" id="BR000343">
    <property type="protein sequence ID" value="FAA00278.1"/>
    <property type="status" value="ALT_SEQ"/>
    <property type="molecule type" value="mRNA"/>
</dbReference>
<dbReference type="PIR" id="T01348">
    <property type="entry name" value="T01348"/>
</dbReference>
<dbReference type="RefSeq" id="NP_001329621.1">
    <property type="nucleotide sequence ID" value="NM_001340235.1"/>
</dbReference>
<dbReference type="RefSeq" id="NP_191931.2">
    <property type="nucleotide sequence ID" value="NM_116237.4"/>
</dbReference>
<dbReference type="SMR" id="Q4V3E0"/>
<dbReference type="PaxDb" id="3702-AT4G00200.1"/>
<dbReference type="ProteomicsDB" id="244916"/>
<dbReference type="EnsemblPlants" id="AT4G00200.1">
    <property type="protein sequence ID" value="AT4G00200.1"/>
    <property type="gene ID" value="AT4G00200"/>
</dbReference>
<dbReference type="EnsemblPlants" id="AT4G00200.2">
    <property type="protein sequence ID" value="AT4G00200.2"/>
    <property type="gene ID" value="AT4G00200"/>
</dbReference>
<dbReference type="GeneID" id="828162"/>
<dbReference type="Gramene" id="AT4G00200.1">
    <property type="protein sequence ID" value="AT4G00200.1"/>
    <property type="gene ID" value="AT4G00200"/>
</dbReference>
<dbReference type="Gramene" id="AT4G00200.2">
    <property type="protein sequence ID" value="AT4G00200.2"/>
    <property type="gene ID" value="AT4G00200"/>
</dbReference>
<dbReference type="KEGG" id="ath:AT4G00200"/>
<dbReference type="Araport" id="AT4G00200"/>
<dbReference type="TAIR" id="AT4G00200">
    <property type="gene designation" value="AHL7"/>
</dbReference>
<dbReference type="eggNOG" id="ENOG502QT7J">
    <property type="taxonomic scope" value="Eukaryota"/>
</dbReference>
<dbReference type="HOGENOM" id="CLU_039808_0_0_1"/>
<dbReference type="InParanoid" id="Q4V3E0"/>
<dbReference type="OMA" id="FMETENQ"/>
<dbReference type="PhylomeDB" id="Q4V3E0"/>
<dbReference type="PRO" id="PR:Q4V3E0"/>
<dbReference type="Proteomes" id="UP000006548">
    <property type="component" value="Chromosome 4"/>
</dbReference>
<dbReference type="ExpressionAtlas" id="Q4V3E0">
    <property type="expression patterns" value="baseline and differential"/>
</dbReference>
<dbReference type="GO" id="GO:0005634">
    <property type="term" value="C:nucleus"/>
    <property type="evidence" value="ECO:0007669"/>
    <property type="project" value="UniProtKB-SubCell"/>
</dbReference>
<dbReference type="GO" id="GO:0003680">
    <property type="term" value="F:minor groove of adenine-thymine-rich DNA binding"/>
    <property type="evidence" value="ECO:0007669"/>
    <property type="project" value="InterPro"/>
</dbReference>
<dbReference type="CDD" id="cd11378">
    <property type="entry name" value="DUF296"/>
    <property type="match status" value="1"/>
</dbReference>
<dbReference type="FunFam" id="3.30.1330.80:FF:000003">
    <property type="entry name" value="AT-hook motif nuclear-localized protein 1-like"/>
    <property type="match status" value="1"/>
</dbReference>
<dbReference type="Gene3D" id="3.30.1330.80">
    <property type="entry name" value="Hypothetical protein, similar to alpha- acetolactate decarboxylase, domain 2"/>
    <property type="match status" value="1"/>
</dbReference>
<dbReference type="InterPro" id="IPR039605">
    <property type="entry name" value="AHL"/>
</dbReference>
<dbReference type="InterPro" id="IPR005175">
    <property type="entry name" value="PPC_dom"/>
</dbReference>
<dbReference type="PANTHER" id="PTHR31500:SF96">
    <property type="entry name" value="AT-HOOK MOTIF NUCLEAR-LOCALIZED PROTEIN 7"/>
    <property type="match status" value="1"/>
</dbReference>
<dbReference type="PANTHER" id="PTHR31500">
    <property type="entry name" value="AT-HOOK MOTIF NUCLEAR-LOCALIZED PROTEIN 9"/>
    <property type="match status" value="1"/>
</dbReference>
<dbReference type="Pfam" id="PF03479">
    <property type="entry name" value="PCC"/>
    <property type="match status" value="1"/>
</dbReference>
<dbReference type="SUPFAM" id="SSF117856">
    <property type="entry name" value="AF0104/ALDC/Ptd012-like"/>
    <property type="match status" value="1"/>
</dbReference>
<dbReference type="PROSITE" id="PS51742">
    <property type="entry name" value="PPC"/>
    <property type="match status" value="1"/>
</dbReference>
<organism>
    <name type="scientific">Arabidopsis thaliana</name>
    <name type="common">Mouse-ear cress</name>
    <dbReference type="NCBI Taxonomy" id="3702"/>
    <lineage>
        <taxon>Eukaryota</taxon>
        <taxon>Viridiplantae</taxon>
        <taxon>Streptophyta</taxon>
        <taxon>Embryophyta</taxon>
        <taxon>Tracheophyta</taxon>
        <taxon>Spermatophyta</taxon>
        <taxon>Magnoliopsida</taxon>
        <taxon>eudicotyledons</taxon>
        <taxon>Gunneridae</taxon>
        <taxon>Pentapetalae</taxon>
        <taxon>rosids</taxon>
        <taxon>malvids</taxon>
        <taxon>Brassicales</taxon>
        <taxon>Brassicaceae</taxon>
        <taxon>Camelineae</taxon>
        <taxon>Arabidopsis</taxon>
    </lineage>
</organism>
<accession>Q4V3E0</accession>
<accession>O81321</accession>
<name>AHL7_ARATH</name>
<proteinExistence type="evidence at transcript level"/>